<reference key="1">
    <citation type="journal article" date="1994" name="Gene">
        <title>Sequence of a dihydrofolate reductase-encoding gene from Candida albicans.</title>
        <authorList>
            <person name="Daly S."/>
            <person name="Mastromei G."/>
            <person name="Yacoub A."/>
            <person name="Lorenzetti R."/>
        </authorList>
    </citation>
    <scope>NUCLEOTIDE SEQUENCE [GENOMIC DNA]</scope>
    <source>
        <strain>10127/5</strain>
    </source>
</reference>
<reference key="2">
    <citation type="journal article" date="1989" name="J. Biol. Chem.">
        <title>Characterization of Candida albicans dihydrofolate reductase.</title>
        <authorList>
            <person name="Baccanari D.P."/>
            <person name="Tansik R.L."/>
            <person name="Joyner S.S."/>
            <person name="Fling M.E."/>
            <person name="Smith P.L."/>
            <person name="Freisheim J.H."/>
        </authorList>
    </citation>
    <scope>PROTEIN SEQUENCE OF 1-25</scope>
    <scope>NUCLEOTIDE SEQUENCE OF 26-36</scope>
</reference>
<reference key="3">
    <citation type="journal article" date="1997" name="J. Biol. Chem.">
        <title>X-ray crystallographic studies of Candida albicans dihydrofolate reductase. High resolution structures of the holoenzyme and an inhibited ternary complex.</title>
        <authorList>
            <person name="Whitlow M."/>
            <person name="Howard A.J."/>
            <person name="Stewart D."/>
            <person name="Hardman K.D."/>
            <person name="Kuyper L.F."/>
            <person name="Baccanari D.P."/>
            <person name="Fling M.E."/>
            <person name="Tansik R.L."/>
        </authorList>
    </citation>
    <scope>NUCLEOTIDE SEQUENCE [GENOMIC DNA]</scope>
    <scope>X-RAY CRYSTALLOGRAPHY (1.85 ANGSTROMS)</scope>
    <source>
        <strain>SYNTEX CA755</strain>
    </source>
</reference>
<reference key="4">
    <citation type="journal article" date="2001" name="J. Med. Chem.">
        <title>X-Ray crystal structures of Candida albicans dihydrofolate reductase: high resolution ternary complexes in which the dihydronicotinamide moiety of NADPH is displaced by an inhibitor.</title>
        <authorList>
            <person name="Whitlow M."/>
            <person name="Howard A.J."/>
            <person name="Stewart D."/>
            <person name="Hardman K.D."/>
            <person name="Chan J.H."/>
            <person name="Baccanari D.P."/>
            <person name="Tansik R.L."/>
            <person name="Hong J.S."/>
            <person name="Kuyper L.F."/>
        </authorList>
    </citation>
    <scope>X-RAY CRYSTALLOGRAPHY (1.70 ANGSTROMS) IN COMPLEX WITH NADPH AND INHIBITOR</scope>
</reference>
<organism>
    <name type="scientific">Candida albicans</name>
    <name type="common">Yeast</name>
    <dbReference type="NCBI Taxonomy" id="5476"/>
    <lineage>
        <taxon>Eukaryota</taxon>
        <taxon>Fungi</taxon>
        <taxon>Dikarya</taxon>
        <taxon>Ascomycota</taxon>
        <taxon>Saccharomycotina</taxon>
        <taxon>Pichiomycetes</taxon>
        <taxon>Debaryomycetaceae</taxon>
        <taxon>Candida/Lodderomyces clade</taxon>
        <taxon>Candida</taxon>
    </lineage>
</organism>
<comment type="function">
    <text>Key enzyme in folate metabolism. Catalyzes an essential reaction for de novo glycine and purine synthesis, and for DNA precursor synthesis.</text>
</comment>
<comment type="catalytic activity">
    <reaction evidence="2">
        <text>(6S)-5,6,7,8-tetrahydrofolate + NADP(+) = 7,8-dihydrofolate + NADPH + H(+)</text>
        <dbReference type="Rhea" id="RHEA:15009"/>
        <dbReference type="ChEBI" id="CHEBI:15378"/>
        <dbReference type="ChEBI" id="CHEBI:57451"/>
        <dbReference type="ChEBI" id="CHEBI:57453"/>
        <dbReference type="ChEBI" id="CHEBI:57783"/>
        <dbReference type="ChEBI" id="CHEBI:58349"/>
        <dbReference type="EC" id="1.5.1.3"/>
    </reaction>
</comment>
<comment type="pathway">
    <text>Cofactor biosynthesis; tetrahydrofolate biosynthesis; 5,6,7,8-tetrahydrofolate from 7,8-dihydrofolate: step 1/1.</text>
</comment>
<comment type="similarity">
    <text evidence="4">Belongs to the dihydrofolate reductase family.</text>
</comment>
<accession>P22906</accession>
<accession>O59840</accession>
<gene>
    <name type="primary">DFR1</name>
</gene>
<dbReference type="EC" id="1.5.1.3"/>
<dbReference type="EMBL" id="X78968">
    <property type="protein sequence ID" value="CAA55561.1"/>
    <property type="molecule type" value="Genomic_DNA"/>
</dbReference>
<dbReference type="EMBL" id="U84588">
    <property type="protein sequence ID" value="AAC05610.1"/>
    <property type="molecule type" value="Genomic_DNA"/>
</dbReference>
<dbReference type="PIR" id="A32203">
    <property type="entry name" value="A32203"/>
</dbReference>
<dbReference type="PDB" id="1AI9">
    <property type="method" value="X-ray"/>
    <property type="resolution" value="1.85 A"/>
    <property type="chains" value="A/B=1-192"/>
</dbReference>
<dbReference type="PDB" id="1AOE">
    <property type="method" value="X-ray"/>
    <property type="resolution" value="1.60 A"/>
    <property type="chains" value="A/B=1-192"/>
</dbReference>
<dbReference type="PDB" id="1IA1">
    <property type="method" value="X-ray"/>
    <property type="resolution" value="1.70 A"/>
    <property type="chains" value="A/B=1-192"/>
</dbReference>
<dbReference type="PDB" id="1IA2">
    <property type="method" value="X-ray"/>
    <property type="resolution" value="1.82 A"/>
    <property type="chains" value="A/B=1-192"/>
</dbReference>
<dbReference type="PDB" id="1IA3">
    <property type="method" value="X-ray"/>
    <property type="resolution" value="1.78 A"/>
    <property type="chains" value="A/B=1-192"/>
</dbReference>
<dbReference type="PDB" id="1IA4">
    <property type="method" value="X-ray"/>
    <property type="resolution" value="1.85 A"/>
    <property type="chains" value="A/B=1-192"/>
</dbReference>
<dbReference type="PDB" id="1M78">
    <property type="method" value="X-ray"/>
    <property type="resolution" value="1.71 A"/>
    <property type="chains" value="A/B=1-192"/>
</dbReference>
<dbReference type="PDB" id="1M79">
    <property type="method" value="X-ray"/>
    <property type="resolution" value="1.70 A"/>
    <property type="chains" value="A/B=1-192"/>
</dbReference>
<dbReference type="PDB" id="1M7A">
    <property type="method" value="X-ray"/>
    <property type="resolution" value="1.76 A"/>
    <property type="chains" value="A/B=1-192"/>
</dbReference>
<dbReference type="PDB" id="3QLR">
    <property type="method" value="X-ray"/>
    <property type="resolution" value="2.15 A"/>
    <property type="chains" value="A/B=3-192"/>
</dbReference>
<dbReference type="PDB" id="3QLS">
    <property type="method" value="X-ray"/>
    <property type="resolution" value="1.73 A"/>
    <property type="chains" value="A/B=3-192"/>
</dbReference>
<dbReference type="PDB" id="3QLW">
    <property type="method" value="X-ray"/>
    <property type="resolution" value="2.50 A"/>
    <property type="chains" value="A/B=3-192"/>
</dbReference>
<dbReference type="PDB" id="4H95">
    <property type="method" value="X-ray"/>
    <property type="resolution" value="2.60 A"/>
    <property type="chains" value="A/B=4-192"/>
</dbReference>
<dbReference type="PDB" id="4H96">
    <property type="method" value="X-ray"/>
    <property type="resolution" value="2.60 A"/>
    <property type="chains" value="A/B=4-192"/>
</dbReference>
<dbReference type="PDB" id="4H97">
    <property type="method" value="X-ray"/>
    <property type="resolution" value="2.20 A"/>
    <property type="chains" value="A/B=3-192"/>
</dbReference>
<dbReference type="PDB" id="4HOE">
    <property type="method" value="X-ray"/>
    <property type="resolution" value="1.76 A"/>
    <property type="chains" value="A/B=1-192"/>
</dbReference>
<dbReference type="PDB" id="4HOF">
    <property type="method" value="X-ray"/>
    <property type="resolution" value="1.76 A"/>
    <property type="chains" value="A/B=1-192"/>
</dbReference>
<dbReference type="PDBsum" id="1AI9"/>
<dbReference type="PDBsum" id="1AOE"/>
<dbReference type="PDBsum" id="1IA1"/>
<dbReference type="PDBsum" id="1IA2"/>
<dbReference type="PDBsum" id="1IA3"/>
<dbReference type="PDBsum" id="1IA4"/>
<dbReference type="PDBsum" id="1M78"/>
<dbReference type="PDBsum" id="1M79"/>
<dbReference type="PDBsum" id="1M7A"/>
<dbReference type="PDBsum" id="3QLR"/>
<dbReference type="PDBsum" id="3QLS"/>
<dbReference type="PDBsum" id="3QLW"/>
<dbReference type="PDBsum" id="4H95"/>
<dbReference type="PDBsum" id="4H96"/>
<dbReference type="PDBsum" id="4H97"/>
<dbReference type="PDBsum" id="4HOE"/>
<dbReference type="PDBsum" id="4HOF"/>
<dbReference type="SMR" id="P22906"/>
<dbReference type="BindingDB" id="P22906"/>
<dbReference type="ChEMBL" id="CHEMBL2329"/>
<dbReference type="DrugBank" id="DB03814">
    <property type="generic name" value="2-(N-morpholino)ethanesulfonic acid"/>
</dbReference>
<dbReference type="DrugBank" id="DB02402">
    <property type="generic name" value="5-(4-Methoxyphenoxy)-2,4-Quinazolinediamine"/>
</dbReference>
<dbReference type="DrugBank" id="DB02001">
    <property type="generic name" value="5-(4-Morpholin-4-Yl-Phenylsulfanyl)-2,4-Quinazolinediamine"/>
</dbReference>
<dbReference type="DrugBank" id="DB04306">
    <property type="generic name" value="5-[(4-Methylphenyl)Sulfanyl]-2,4-Quinazolinediamine"/>
</dbReference>
<dbReference type="DrugBank" id="DB01958">
    <property type="generic name" value="5-[4-Tert-Butylphenylsulfanyl]-2,4-Quinazolinediamine"/>
</dbReference>
<dbReference type="DrugBank" id="DB01929">
    <property type="generic name" value="5-Chloryl-2,4,6-quinazolinetriamine"/>
</dbReference>
<dbReference type="DrugBank" id="DB04163">
    <property type="generic name" value="5-Phenylsulfanyl-2,4-Quinazolinediamine"/>
</dbReference>
<dbReference type="DrugCentral" id="P22906"/>
<dbReference type="VEuPathDB" id="FungiDB:C7_03130C_A"/>
<dbReference type="VEuPathDB" id="FungiDB:CAWG_05646"/>
<dbReference type="UniPathway" id="UPA00077">
    <property type="reaction ID" value="UER00158"/>
</dbReference>
<dbReference type="EvolutionaryTrace" id="P22906"/>
<dbReference type="GO" id="GO:0005739">
    <property type="term" value="C:mitochondrion"/>
    <property type="evidence" value="ECO:0007669"/>
    <property type="project" value="TreeGrafter"/>
</dbReference>
<dbReference type="GO" id="GO:0004146">
    <property type="term" value="F:dihydrofolate reductase activity"/>
    <property type="evidence" value="ECO:0007669"/>
    <property type="project" value="UniProtKB-EC"/>
</dbReference>
<dbReference type="GO" id="GO:0050661">
    <property type="term" value="F:NADP binding"/>
    <property type="evidence" value="ECO:0007669"/>
    <property type="project" value="InterPro"/>
</dbReference>
<dbReference type="GO" id="GO:0046452">
    <property type="term" value="P:dihydrofolate metabolic process"/>
    <property type="evidence" value="ECO:0007669"/>
    <property type="project" value="TreeGrafter"/>
</dbReference>
<dbReference type="GO" id="GO:0046655">
    <property type="term" value="P:folic acid metabolic process"/>
    <property type="evidence" value="ECO:0007669"/>
    <property type="project" value="TreeGrafter"/>
</dbReference>
<dbReference type="GO" id="GO:0006730">
    <property type="term" value="P:one-carbon metabolic process"/>
    <property type="evidence" value="ECO:0007669"/>
    <property type="project" value="UniProtKB-KW"/>
</dbReference>
<dbReference type="GO" id="GO:0046654">
    <property type="term" value="P:tetrahydrofolate biosynthetic process"/>
    <property type="evidence" value="ECO:0007669"/>
    <property type="project" value="UniProtKB-UniPathway"/>
</dbReference>
<dbReference type="CDD" id="cd00209">
    <property type="entry name" value="DHFR"/>
    <property type="match status" value="1"/>
</dbReference>
<dbReference type="FunFam" id="3.40.430.10:FF:000024">
    <property type="entry name" value="Dihydrofolate reductase"/>
    <property type="match status" value="1"/>
</dbReference>
<dbReference type="Gene3D" id="3.40.430.10">
    <property type="entry name" value="Dihydrofolate Reductase, subunit A"/>
    <property type="match status" value="1"/>
</dbReference>
<dbReference type="InterPro" id="IPR012259">
    <property type="entry name" value="DHFR"/>
</dbReference>
<dbReference type="InterPro" id="IPR024072">
    <property type="entry name" value="DHFR-like_dom_sf"/>
</dbReference>
<dbReference type="InterPro" id="IPR017925">
    <property type="entry name" value="DHFR_CS"/>
</dbReference>
<dbReference type="InterPro" id="IPR001796">
    <property type="entry name" value="DHFR_dom"/>
</dbReference>
<dbReference type="PANTHER" id="PTHR48069">
    <property type="entry name" value="DIHYDROFOLATE REDUCTASE"/>
    <property type="match status" value="1"/>
</dbReference>
<dbReference type="PANTHER" id="PTHR48069:SF3">
    <property type="entry name" value="DIHYDROFOLATE REDUCTASE"/>
    <property type="match status" value="1"/>
</dbReference>
<dbReference type="Pfam" id="PF00186">
    <property type="entry name" value="DHFR_1"/>
    <property type="match status" value="1"/>
</dbReference>
<dbReference type="PRINTS" id="PR00070">
    <property type="entry name" value="DHFR"/>
</dbReference>
<dbReference type="SUPFAM" id="SSF53597">
    <property type="entry name" value="Dihydrofolate reductase-like"/>
    <property type="match status" value="1"/>
</dbReference>
<dbReference type="PROSITE" id="PS00075">
    <property type="entry name" value="DHFR_1"/>
    <property type="match status" value="1"/>
</dbReference>
<dbReference type="PROSITE" id="PS51330">
    <property type="entry name" value="DHFR_2"/>
    <property type="match status" value="1"/>
</dbReference>
<sequence length="192" mass="22139">MSKPNVAIIVAALKPALGIGYKGKMPWRLRKEIRYFKDVTTRTTKPNTRNAVIMGRKTWESIPQKFRPLPDRLNIILSRSYENKIIDDNIIHASSIESSLNLVSDVERVFIIGGAEIYNELINNSLVSHLLITEIEHPSPESIEMDTFLKFPLESWTKQPKSELQKFVGDTVLEDDIKEGDFTYNYTLWTRK</sequence>
<feature type="chain" id="PRO_0000186374" description="Dihydrofolate reductase">
    <location>
        <begin position="1"/>
        <end position="192"/>
    </location>
</feature>
<feature type="domain" description="DHFR" evidence="2">
    <location>
        <begin position="5"/>
        <end position="191"/>
    </location>
</feature>
<feature type="binding site" evidence="3">
    <location>
        <position position="11"/>
    </location>
    <ligand>
        <name>NADP(+)</name>
        <dbReference type="ChEBI" id="CHEBI:58349"/>
    </ligand>
</feature>
<feature type="binding site" evidence="3">
    <location>
        <begin position="18"/>
        <end position="24"/>
    </location>
    <ligand>
        <name>NADP(+)</name>
        <dbReference type="ChEBI" id="CHEBI:58349"/>
    </ligand>
</feature>
<feature type="binding site" evidence="5">
    <location>
        <begin position="32"/>
        <end position="37"/>
    </location>
    <ligand>
        <name>substrate</name>
    </ligand>
</feature>
<feature type="binding site" evidence="3">
    <location>
        <begin position="56"/>
        <end position="58"/>
    </location>
    <ligand>
        <name>NADP(+)</name>
        <dbReference type="ChEBI" id="CHEBI:58349"/>
    </ligand>
</feature>
<feature type="binding site" evidence="1">
    <location>
        <position position="72"/>
    </location>
    <ligand>
        <name>substrate</name>
    </ligand>
</feature>
<feature type="binding site" evidence="3">
    <location>
        <begin position="78"/>
        <end position="80"/>
    </location>
    <ligand>
        <name>NADP(+)</name>
        <dbReference type="ChEBI" id="CHEBI:58349"/>
    </ligand>
</feature>
<feature type="binding site" evidence="5">
    <location>
        <position position="112"/>
    </location>
    <ligand>
        <name>substrate</name>
    </ligand>
</feature>
<feature type="binding site" evidence="3">
    <location>
        <begin position="113"/>
        <end position="120"/>
    </location>
    <ligand>
        <name>NADP(+)</name>
        <dbReference type="ChEBI" id="CHEBI:58349"/>
    </ligand>
</feature>
<feature type="binding site" evidence="5">
    <location>
        <position position="118"/>
    </location>
    <ligand>
        <name>substrate</name>
    </ligand>
</feature>
<feature type="sequence variant" description="In strain: SYNTEX CA755.">
    <original>S</original>
    <variation>L</variation>
    <location>
        <position position="2"/>
    </location>
</feature>
<feature type="sequence variant" description="In strain: SYNTEX CA755.">
    <original>K</original>
    <variation>E</variation>
    <location>
        <position position="84"/>
    </location>
</feature>
<feature type="strand" evidence="6">
    <location>
        <begin position="6"/>
        <end position="13"/>
    </location>
</feature>
<feature type="turn" evidence="6">
    <location>
        <begin position="14"/>
        <end position="17"/>
    </location>
</feature>
<feature type="strand" evidence="6">
    <location>
        <begin position="18"/>
        <end position="21"/>
    </location>
</feature>
<feature type="helix" evidence="6">
    <location>
        <begin position="30"/>
        <end position="41"/>
    </location>
</feature>
<feature type="strand" evidence="7">
    <location>
        <begin position="44"/>
        <end position="47"/>
    </location>
</feature>
<feature type="strand" evidence="6">
    <location>
        <begin position="49"/>
        <end position="55"/>
    </location>
</feature>
<feature type="helix" evidence="6">
    <location>
        <begin position="56"/>
        <end position="61"/>
    </location>
</feature>
<feature type="helix" evidence="6">
    <location>
        <begin position="64"/>
        <end position="66"/>
    </location>
</feature>
<feature type="strand" evidence="6">
    <location>
        <begin position="72"/>
        <end position="77"/>
    </location>
</feature>
<feature type="strand" evidence="8">
    <location>
        <begin position="79"/>
        <end position="81"/>
    </location>
</feature>
<feature type="strand" evidence="6">
    <location>
        <begin position="84"/>
        <end position="87"/>
    </location>
</feature>
<feature type="strand" evidence="6">
    <location>
        <begin position="90"/>
        <end position="95"/>
    </location>
</feature>
<feature type="helix" evidence="6">
    <location>
        <begin position="96"/>
        <end position="101"/>
    </location>
</feature>
<feature type="strand" evidence="6">
    <location>
        <begin position="105"/>
        <end position="111"/>
    </location>
</feature>
<feature type="helix" evidence="6">
    <location>
        <begin position="115"/>
        <end position="121"/>
    </location>
</feature>
<feature type="strand" evidence="6">
    <location>
        <begin position="127"/>
        <end position="136"/>
    </location>
</feature>
<feature type="helix" evidence="6">
    <location>
        <begin position="140"/>
        <end position="142"/>
    </location>
</feature>
<feature type="helix" evidence="6">
    <location>
        <begin position="153"/>
        <end position="155"/>
    </location>
</feature>
<feature type="strand" evidence="6">
    <location>
        <begin position="156"/>
        <end position="158"/>
    </location>
</feature>
<feature type="helix" evidence="6">
    <location>
        <begin position="161"/>
        <end position="168"/>
    </location>
</feature>
<feature type="strand" evidence="6">
    <location>
        <begin position="175"/>
        <end position="179"/>
    </location>
</feature>
<feature type="strand" evidence="6">
    <location>
        <begin position="182"/>
        <end position="191"/>
    </location>
</feature>
<keyword id="KW-0002">3D-structure</keyword>
<keyword id="KW-0903">Direct protein sequencing</keyword>
<keyword id="KW-0521">NADP</keyword>
<keyword id="KW-0554">One-carbon metabolism</keyword>
<keyword id="KW-0560">Oxidoreductase</keyword>
<protein>
    <recommendedName>
        <fullName>Dihydrofolate reductase</fullName>
        <ecNumber>1.5.1.3</ecNumber>
    </recommendedName>
</protein>
<evidence type="ECO:0000250" key="1">
    <source>
        <dbReference type="UniProtKB" id="P0ABQ4"/>
    </source>
</evidence>
<evidence type="ECO:0000255" key="2">
    <source>
        <dbReference type="PROSITE-ProRule" id="PRU00660"/>
    </source>
</evidence>
<evidence type="ECO:0000269" key="3">
    <source>
    </source>
</evidence>
<evidence type="ECO:0000305" key="4"/>
<evidence type="ECO:0000305" key="5">
    <source>
    </source>
</evidence>
<evidence type="ECO:0007829" key="6">
    <source>
        <dbReference type="PDB" id="1AOE"/>
    </source>
</evidence>
<evidence type="ECO:0007829" key="7">
    <source>
        <dbReference type="PDB" id="1IA1"/>
    </source>
</evidence>
<evidence type="ECO:0007829" key="8">
    <source>
        <dbReference type="PDB" id="4H96"/>
    </source>
</evidence>
<name>DYR_CANAX</name>
<proteinExistence type="evidence at protein level"/>